<name>GLCD2_SACS2</name>
<protein>
    <recommendedName>
        <fullName evidence="1">Glucose 1-dehydrogenase 2</fullName>
        <shortName evidence="1">GDH 2</shortName>
        <shortName evidence="1">GlcDH 2</shortName>
        <ecNumber evidence="1">1.1.1.47</ecNumber>
    </recommendedName>
</protein>
<organism>
    <name type="scientific">Saccharolobus solfataricus (strain ATCC 35092 / DSM 1617 / JCM 11322 / P2)</name>
    <name type="common">Sulfolobus solfataricus</name>
    <dbReference type="NCBI Taxonomy" id="273057"/>
    <lineage>
        <taxon>Archaea</taxon>
        <taxon>Thermoproteota</taxon>
        <taxon>Thermoprotei</taxon>
        <taxon>Sulfolobales</taxon>
        <taxon>Sulfolobaceae</taxon>
        <taxon>Saccharolobus</taxon>
    </lineage>
</organism>
<evidence type="ECO:0000255" key="1">
    <source>
        <dbReference type="HAMAP-Rule" id="MF_02127"/>
    </source>
</evidence>
<evidence type="ECO:0000305" key="2"/>
<dbReference type="EC" id="1.1.1.47" evidence="1"/>
<dbReference type="EMBL" id="AE006641">
    <property type="protein sequence ID" value="AAK43143.1"/>
    <property type="status" value="ALT_INIT"/>
    <property type="molecule type" value="Genomic_DNA"/>
</dbReference>
<dbReference type="PIR" id="H90485">
    <property type="entry name" value="H90485"/>
</dbReference>
<dbReference type="RefSeq" id="WP_009990696.1">
    <property type="nucleotide sequence ID" value="NC_002754.1"/>
</dbReference>
<dbReference type="SMR" id="Q97UH6"/>
<dbReference type="FunCoup" id="Q97UH6">
    <property type="interactions" value="127"/>
</dbReference>
<dbReference type="STRING" id="273057.SSO3042"/>
<dbReference type="PaxDb" id="273057-SSO3042"/>
<dbReference type="EnsemblBacteria" id="AAK43143">
    <property type="protein sequence ID" value="AAK43143"/>
    <property type="gene ID" value="SSO3042"/>
</dbReference>
<dbReference type="KEGG" id="sso:SSO3042"/>
<dbReference type="PATRIC" id="fig|273057.12.peg.3140"/>
<dbReference type="eggNOG" id="arCOG01459">
    <property type="taxonomic scope" value="Archaea"/>
</dbReference>
<dbReference type="HOGENOM" id="CLU_026673_1_0_2"/>
<dbReference type="InParanoid" id="Q97UH6"/>
<dbReference type="Proteomes" id="UP000001974">
    <property type="component" value="Chromosome"/>
</dbReference>
<dbReference type="GO" id="GO:0005536">
    <property type="term" value="F:D-glucose binding"/>
    <property type="evidence" value="ECO:0007669"/>
    <property type="project" value="UniProtKB-UniRule"/>
</dbReference>
<dbReference type="GO" id="GO:0047934">
    <property type="term" value="F:glucose 1-dehydrogenase (NAD+) activity"/>
    <property type="evidence" value="ECO:0007669"/>
    <property type="project" value="RHEA"/>
</dbReference>
<dbReference type="GO" id="GO:0047935">
    <property type="term" value="F:glucose 1-dehydrogenase (NADP+) activity"/>
    <property type="evidence" value="ECO:0007669"/>
    <property type="project" value="RHEA"/>
</dbReference>
<dbReference type="GO" id="GO:0070403">
    <property type="term" value="F:NAD+ binding"/>
    <property type="evidence" value="ECO:0007669"/>
    <property type="project" value="UniProtKB-UniRule"/>
</dbReference>
<dbReference type="GO" id="GO:0070401">
    <property type="term" value="F:NADP+ binding"/>
    <property type="evidence" value="ECO:0007669"/>
    <property type="project" value="UniProtKB-UniRule"/>
</dbReference>
<dbReference type="GO" id="GO:0008270">
    <property type="term" value="F:zinc ion binding"/>
    <property type="evidence" value="ECO:0007669"/>
    <property type="project" value="UniProtKB-UniRule"/>
</dbReference>
<dbReference type="GO" id="GO:0019595">
    <property type="term" value="P:non-phosphorylated glucose catabolic process"/>
    <property type="evidence" value="ECO:0007669"/>
    <property type="project" value="UniProtKB-UniRule"/>
</dbReference>
<dbReference type="GO" id="GO:0051262">
    <property type="term" value="P:protein tetramerization"/>
    <property type="evidence" value="ECO:0007669"/>
    <property type="project" value="UniProtKB-ARBA"/>
</dbReference>
<dbReference type="CDD" id="cd08230">
    <property type="entry name" value="glucose_DH"/>
    <property type="match status" value="1"/>
</dbReference>
<dbReference type="Gene3D" id="3.90.180.10">
    <property type="entry name" value="Medium-chain alcohol dehydrogenases, catalytic domain"/>
    <property type="match status" value="1"/>
</dbReference>
<dbReference type="Gene3D" id="3.40.50.720">
    <property type="entry name" value="NAD(P)-binding Rossmann-like Domain"/>
    <property type="match status" value="1"/>
</dbReference>
<dbReference type="HAMAP" id="MF_02127">
    <property type="entry name" value="Glucose_DH"/>
    <property type="match status" value="1"/>
</dbReference>
<dbReference type="InterPro" id="IPR013154">
    <property type="entry name" value="ADH-like_N"/>
</dbReference>
<dbReference type="InterPro" id="IPR026583">
    <property type="entry name" value="Glc_1-DH_arc"/>
</dbReference>
<dbReference type="InterPro" id="IPR031640">
    <property type="entry name" value="Glu_dehyd_C"/>
</dbReference>
<dbReference type="InterPro" id="IPR011032">
    <property type="entry name" value="GroES-like_sf"/>
</dbReference>
<dbReference type="InterPro" id="IPR036291">
    <property type="entry name" value="NAD(P)-bd_dom_sf"/>
</dbReference>
<dbReference type="InterPro" id="IPR050129">
    <property type="entry name" value="Zn_alcohol_dh"/>
</dbReference>
<dbReference type="PANTHER" id="PTHR43401">
    <property type="entry name" value="L-THREONINE 3-DEHYDROGENASE"/>
    <property type="match status" value="1"/>
</dbReference>
<dbReference type="PANTHER" id="PTHR43401:SF2">
    <property type="entry name" value="L-THREONINE 3-DEHYDROGENASE"/>
    <property type="match status" value="1"/>
</dbReference>
<dbReference type="Pfam" id="PF08240">
    <property type="entry name" value="ADH_N"/>
    <property type="match status" value="1"/>
</dbReference>
<dbReference type="Pfam" id="PF16912">
    <property type="entry name" value="Glu_dehyd_C"/>
    <property type="match status" value="1"/>
</dbReference>
<dbReference type="SUPFAM" id="SSF50129">
    <property type="entry name" value="GroES-like"/>
    <property type="match status" value="1"/>
</dbReference>
<dbReference type="SUPFAM" id="SSF51735">
    <property type="entry name" value="NAD(P)-binding Rossmann-fold domains"/>
    <property type="match status" value="1"/>
</dbReference>
<sequence length="368" mass="40890">MKAIVVKPPNPGVEIKDVKDDENKLSNIGLVKVKILENGICGTDREIVSGKRTSVKPPIGKDELILGHEAIGIVEVGGYGFKEGELVMPINKRGCGKCLNCLIGRPDFCETGEGLVAGTKGLDGFMREYLYDDPKYLVKIPPAIKDIAILAQPLADIEKSVESILTSQKRIPIWTCDDGTLNCRKALVVGTGPTGILFSLVLRTYGFQVWIANRRELLDNEKEILDEPRILFYNSAKGYESLVKDVDKFDLIIDTTGASASIIQELVPLLQINGVLGLFGFPRYDNFSLDYKIVQDFVINNRIIIGLDNGQKPHFQQALIHLASWKSLWPKTASKMITKIISINDEREVISSLREKLPGEIKVKIVWE</sequence>
<comment type="function">
    <text evidence="1">Catalyzes the NAD(P)(+)-dependent oxidation of D-glucose to D-gluconate via gluconolactone. Can utilize both NAD(+) and NADP(+) as electron acceptor. Is involved in the degradation of glucose through a non-phosphorylative variant of the Entner-Doudoroff pathway.</text>
</comment>
<comment type="catalytic activity">
    <reaction evidence="1">
        <text>D-glucose + NAD(+) = D-glucono-1,5-lactone + NADH + H(+)</text>
        <dbReference type="Rhea" id="RHEA:14293"/>
        <dbReference type="ChEBI" id="CHEBI:4167"/>
        <dbReference type="ChEBI" id="CHEBI:15378"/>
        <dbReference type="ChEBI" id="CHEBI:16217"/>
        <dbReference type="ChEBI" id="CHEBI:57540"/>
        <dbReference type="ChEBI" id="CHEBI:57945"/>
        <dbReference type="EC" id="1.1.1.47"/>
    </reaction>
</comment>
<comment type="catalytic activity">
    <reaction evidence="1">
        <text>D-glucose + NADP(+) = D-glucono-1,5-lactone + NADPH + H(+)</text>
        <dbReference type="Rhea" id="RHEA:14405"/>
        <dbReference type="ChEBI" id="CHEBI:4167"/>
        <dbReference type="ChEBI" id="CHEBI:15378"/>
        <dbReference type="ChEBI" id="CHEBI:16217"/>
        <dbReference type="ChEBI" id="CHEBI:57783"/>
        <dbReference type="ChEBI" id="CHEBI:58349"/>
        <dbReference type="EC" id="1.1.1.47"/>
    </reaction>
</comment>
<comment type="cofactor">
    <cofactor evidence="1">
        <name>Zn(2+)</name>
        <dbReference type="ChEBI" id="CHEBI:29105"/>
    </cofactor>
    <text evidence="1">Binds 2 Zn(2+) ions per subunit. One of the zinc atoms is essential for catalytic activity while the other has a structural function.</text>
</comment>
<comment type="similarity">
    <text evidence="1">Belongs to the zinc-containing alcohol dehydrogenase family. Glucose 1-dehydrogenase subfamily.</text>
</comment>
<comment type="sequence caution" evidence="2">
    <conflict type="erroneous initiation">
        <sequence resource="EMBL-CDS" id="AAK43143"/>
    </conflict>
    <text>Extended N-terminus.</text>
</comment>
<reference key="1">
    <citation type="journal article" date="2001" name="Proc. Natl. Acad. Sci. U.S.A.">
        <title>The complete genome of the crenarchaeon Sulfolobus solfataricus P2.</title>
        <authorList>
            <person name="She Q."/>
            <person name="Singh R.K."/>
            <person name="Confalonieri F."/>
            <person name="Zivanovic Y."/>
            <person name="Allard G."/>
            <person name="Awayez M.J."/>
            <person name="Chan-Weiher C.C.-Y."/>
            <person name="Clausen I.G."/>
            <person name="Curtis B.A."/>
            <person name="De Moors A."/>
            <person name="Erauso G."/>
            <person name="Fletcher C."/>
            <person name="Gordon P.M.K."/>
            <person name="Heikamp-de Jong I."/>
            <person name="Jeffries A.C."/>
            <person name="Kozera C.J."/>
            <person name="Medina N."/>
            <person name="Peng X."/>
            <person name="Thi-Ngoc H.P."/>
            <person name="Redder P."/>
            <person name="Schenk M.E."/>
            <person name="Theriault C."/>
            <person name="Tolstrup N."/>
            <person name="Charlebois R.L."/>
            <person name="Doolittle W.F."/>
            <person name="Duguet M."/>
            <person name="Gaasterland T."/>
            <person name="Garrett R.A."/>
            <person name="Ragan M.A."/>
            <person name="Sensen C.W."/>
            <person name="Van der Oost J."/>
        </authorList>
    </citation>
    <scope>NUCLEOTIDE SEQUENCE [LARGE SCALE GENOMIC DNA]</scope>
    <source>
        <strain>ATCC 35092 / DSM 1617 / JCM 11322 / P2</strain>
    </source>
</reference>
<accession>Q97UH6</accession>
<feature type="chain" id="PRO_0000414841" description="Glucose 1-dehydrogenase 2">
    <location>
        <begin position="1"/>
        <end position="368"/>
    </location>
</feature>
<feature type="binding site" evidence="1">
    <location>
        <position position="41"/>
    </location>
    <ligand>
        <name>Zn(2+)</name>
        <dbReference type="ChEBI" id="CHEBI:29105"/>
        <label>1</label>
        <note>catalytic</note>
    </ligand>
</feature>
<feature type="binding site" evidence="1">
    <location>
        <position position="43"/>
    </location>
    <ligand>
        <name>substrate</name>
    </ligand>
</feature>
<feature type="binding site" evidence="1">
    <location>
        <position position="68"/>
    </location>
    <ligand>
        <name>Zn(2+)</name>
        <dbReference type="ChEBI" id="CHEBI:29105"/>
        <label>1</label>
        <note>catalytic</note>
    </ligand>
</feature>
<feature type="binding site" evidence="1">
    <location>
        <position position="69"/>
    </location>
    <ligand>
        <name>Zn(2+)</name>
        <dbReference type="ChEBI" id="CHEBI:29105"/>
        <label>1</label>
        <note>catalytic</note>
    </ligand>
</feature>
<feature type="binding site" evidence="1">
    <location>
        <position position="91"/>
    </location>
    <ligand>
        <name>substrate</name>
    </ligand>
</feature>
<feature type="binding site" evidence="1">
    <location>
        <position position="95"/>
    </location>
    <ligand>
        <name>Zn(2+)</name>
        <dbReference type="ChEBI" id="CHEBI:29105"/>
        <label>2</label>
        <note>structural</note>
    </ligand>
</feature>
<feature type="binding site" evidence="1">
    <location>
        <position position="98"/>
    </location>
    <ligand>
        <name>Zn(2+)</name>
        <dbReference type="ChEBI" id="CHEBI:29105"/>
        <label>2</label>
        <note>structural</note>
    </ligand>
</feature>
<feature type="binding site" evidence="1">
    <location>
        <position position="101"/>
    </location>
    <ligand>
        <name>Zn(2+)</name>
        <dbReference type="ChEBI" id="CHEBI:29105"/>
        <label>2</label>
        <note>structural</note>
    </ligand>
</feature>
<feature type="binding site" evidence="1">
    <location>
        <position position="109"/>
    </location>
    <ligand>
        <name>Zn(2+)</name>
        <dbReference type="ChEBI" id="CHEBI:29105"/>
        <label>2</label>
        <note>structural</note>
    </ligand>
</feature>
<feature type="binding site" evidence="1">
    <location>
        <position position="152"/>
    </location>
    <ligand>
        <name>substrate</name>
    </ligand>
</feature>
<feature type="binding site" evidence="1">
    <location>
        <position position="152"/>
    </location>
    <ligand>
        <name>Zn(2+)</name>
        <dbReference type="ChEBI" id="CHEBI:29105"/>
        <label>1</label>
        <note>catalytic</note>
    </ligand>
</feature>
<feature type="binding site" evidence="1">
    <location>
        <position position="156"/>
    </location>
    <ligand>
        <name>substrate</name>
    </ligand>
</feature>
<feature type="binding site" evidence="1">
    <location>
        <begin position="213"/>
        <end position="215"/>
    </location>
    <ligand>
        <name>NADP(+)</name>
        <dbReference type="ChEBI" id="CHEBI:58349"/>
    </ligand>
</feature>
<feature type="binding site" evidence="1">
    <location>
        <begin position="279"/>
        <end position="281"/>
    </location>
    <ligand>
        <name>NADP(+)</name>
        <dbReference type="ChEBI" id="CHEBI:58349"/>
    </ligand>
</feature>
<feature type="binding site" evidence="1">
    <location>
        <begin position="307"/>
        <end position="309"/>
    </location>
    <ligand>
        <name>NADP(+)</name>
        <dbReference type="ChEBI" id="CHEBI:58349"/>
    </ligand>
</feature>
<feature type="binding site" evidence="1">
    <location>
        <position position="309"/>
    </location>
    <ligand>
        <name>substrate</name>
    </ligand>
</feature>
<feature type="binding site" evidence="1">
    <location>
        <position position="356"/>
    </location>
    <ligand>
        <name>NADP(+)</name>
        <dbReference type="ChEBI" id="CHEBI:58349"/>
    </ligand>
</feature>
<gene>
    <name evidence="1" type="primary">gdh2</name>
    <name type="synonym">dhg-2</name>
    <name type="ordered locus">SSO3042</name>
</gene>
<proteinExistence type="inferred from homology"/>
<keyword id="KW-0119">Carbohydrate metabolism</keyword>
<keyword id="KW-0479">Metal-binding</keyword>
<keyword id="KW-0520">NAD</keyword>
<keyword id="KW-0521">NADP</keyword>
<keyword id="KW-0547">Nucleotide-binding</keyword>
<keyword id="KW-0560">Oxidoreductase</keyword>
<keyword id="KW-1185">Reference proteome</keyword>
<keyword id="KW-0862">Zinc</keyword>